<evidence type="ECO:0000250" key="1">
    <source>
        <dbReference type="UniProtKB" id="P50389"/>
    </source>
</evidence>
<evidence type="ECO:0000255" key="2">
    <source>
        <dbReference type="HAMAP-Rule" id="MF_01627"/>
    </source>
</evidence>
<comment type="function">
    <text evidence="2">Catalyzes the reversible phosphorolytic breakdown of the N-glycosidic bond in the beta-(deoxy)ribonucleoside molecules, with the formation of the corresponding free purine bases and pentose-1-phosphate.</text>
</comment>
<comment type="catalytic activity">
    <reaction evidence="2">
        <text>a purine D-ribonucleoside + phosphate = a purine nucleobase + alpha-D-ribose 1-phosphate</text>
        <dbReference type="Rhea" id="RHEA:19805"/>
        <dbReference type="ChEBI" id="CHEBI:26386"/>
        <dbReference type="ChEBI" id="CHEBI:43474"/>
        <dbReference type="ChEBI" id="CHEBI:57720"/>
        <dbReference type="ChEBI" id="CHEBI:142355"/>
        <dbReference type="EC" id="2.4.2.1"/>
    </reaction>
</comment>
<comment type="catalytic activity">
    <reaction evidence="2">
        <text>a purine 2'-deoxy-D-ribonucleoside + phosphate = a purine nucleobase + 2-deoxy-alpha-D-ribose 1-phosphate</text>
        <dbReference type="Rhea" id="RHEA:36431"/>
        <dbReference type="ChEBI" id="CHEBI:26386"/>
        <dbReference type="ChEBI" id="CHEBI:43474"/>
        <dbReference type="ChEBI" id="CHEBI:57259"/>
        <dbReference type="ChEBI" id="CHEBI:142361"/>
        <dbReference type="EC" id="2.4.2.1"/>
    </reaction>
</comment>
<comment type="subunit">
    <text evidence="2">Homohexamer; trimer of homodimers.</text>
</comment>
<comment type="similarity">
    <text evidence="2">Belongs to the PNP/UDP phosphorylase family.</text>
</comment>
<reference key="1">
    <citation type="submission" date="2009-03" db="EMBL/GenBank/DDBJ databases">
        <title>Complete genome sequence of Edwardsiella ictaluri 93-146.</title>
        <authorList>
            <person name="Williams M.L."/>
            <person name="Gillaspy A.F."/>
            <person name="Dyer D.W."/>
            <person name="Thune R.L."/>
            <person name="Waldbieser G.C."/>
            <person name="Schuster S.C."/>
            <person name="Gipson J."/>
            <person name="Zaitshik J."/>
            <person name="Landry C."/>
            <person name="Lawrence M.L."/>
        </authorList>
    </citation>
    <scope>NUCLEOTIDE SEQUENCE [LARGE SCALE GENOMIC DNA]</scope>
    <source>
        <strain>93-146</strain>
    </source>
</reference>
<keyword id="KW-0328">Glycosyltransferase</keyword>
<keyword id="KW-0808">Transferase</keyword>
<proteinExistence type="inferred from homology"/>
<feature type="chain" id="PRO_1000215749" description="Purine nucleoside phosphorylase DeoD-type">
    <location>
        <begin position="1"/>
        <end position="237"/>
    </location>
</feature>
<feature type="active site" description="Proton donor" evidence="2">
    <location>
        <position position="205"/>
    </location>
</feature>
<feature type="binding site" evidence="1">
    <location>
        <position position="5"/>
    </location>
    <ligand>
        <name>a purine D-ribonucleoside</name>
        <dbReference type="ChEBI" id="CHEBI:142355"/>
        <note>ligand shared between dimeric partners</note>
    </ligand>
</feature>
<feature type="binding site" description="in other chain" evidence="1">
    <location>
        <position position="21"/>
    </location>
    <ligand>
        <name>phosphate</name>
        <dbReference type="ChEBI" id="CHEBI:43474"/>
        <note>ligand shared between dimeric partners</note>
    </ligand>
</feature>
<feature type="binding site" description="in other chain" evidence="1">
    <location>
        <position position="25"/>
    </location>
    <ligand>
        <name>phosphate</name>
        <dbReference type="ChEBI" id="CHEBI:43474"/>
        <note>ligand shared between dimeric partners</note>
    </ligand>
</feature>
<feature type="binding site" evidence="1">
    <location>
        <position position="44"/>
    </location>
    <ligand>
        <name>phosphate</name>
        <dbReference type="ChEBI" id="CHEBI:43474"/>
        <note>ligand shared between dimeric partners</note>
    </ligand>
</feature>
<feature type="binding site" description="in other chain" evidence="1">
    <location>
        <begin position="88"/>
        <end position="91"/>
    </location>
    <ligand>
        <name>phosphate</name>
        <dbReference type="ChEBI" id="CHEBI:43474"/>
        <note>ligand shared between dimeric partners</note>
    </ligand>
</feature>
<feature type="binding site" description="in other chain" evidence="1">
    <location>
        <begin position="180"/>
        <end position="182"/>
    </location>
    <ligand>
        <name>a purine D-ribonucleoside</name>
        <dbReference type="ChEBI" id="CHEBI:142355"/>
        <note>ligand shared between dimeric partners</note>
    </ligand>
</feature>
<feature type="binding site" description="in other chain" evidence="1">
    <location>
        <begin position="204"/>
        <end position="205"/>
    </location>
    <ligand>
        <name>a purine D-ribonucleoside</name>
        <dbReference type="ChEBI" id="CHEBI:142355"/>
        <note>ligand shared between dimeric partners</note>
    </ligand>
</feature>
<feature type="site" description="Important for catalytic activity" evidence="2">
    <location>
        <position position="218"/>
    </location>
</feature>
<sequence length="237" mass="25654">MATPHINAEMGDFADVVLMPGDPLRAKHIAETFLQDVRQVNNVRGMLGFTGTYKGRKISVMGHGMGIPSCSIYAKELITDFGVKKIIRVGSCGAVSMDVKLRDVVIGMGACTDSKVNRLRFKDNDFAAIADFDMVRNAADAAKAKGIDARVGNLFSADLFYSPDPTMFDVMEKYGILGVEMEAAGIYGVAAEFGVKALTICTVSDHIRTHEQTTAAERQTTFNDMIEIALESVLLGD</sequence>
<organism>
    <name type="scientific">Edwardsiella ictaluri (strain 93-146)</name>
    <dbReference type="NCBI Taxonomy" id="634503"/>
    <lineage>
        <taxon>Bacteria</taxon>
        <taxon>Pseudomonadati</taxon>
        <taxon>Pseudomonadota</taxon>
        <taxon>Gammaproteobacteria</taxon>
        <taxon>Enterobacterales</taxon>
        <taxon>Hafniaceae</taxon>
        <taxon>Edwardsiella</taxon>
    </lineage>
</organism>
<dbReference type="EC" id="2.4.2.1" evidence="2"/>
<dbReference type="EMBL" id="CP001600">
    <property type="protein sequence ID" value="ACR67794.1"/>
    <property type="molecule type" value="Genomic_DNA"/>
</dbReference>
<dbReference type="RefSeq" id="WP_015869994.1">
    <property type="nucleotide sequence ID" value="NZ_CP169062.1"/>
</dbReference>
<dbReference type="SMR" id="C5BHJ5"/>
<dbReference type="STRING" id="67780.B6E78_13530"/>
<dbReference type="GeneID" id="69537643"/>
<dbReference type="KEGG" id="eic:NT01EI_0565"/>
<dbReference type="PATRIC" id="fig|634503.3.peg.510"/>
<dbReference type="HOGENOM" id="CLU_068457_2_0_6"/>
<dbReference type="OrthoDB" id="9782889at2"/>
<dbReference type="Proteomes" id="UP000001485">
    <property type="component" value="Chromosome"/>
</dbReference>
<dbReference type="GO" id="GO:0005829">
    <property type="term" value="C:cytosol"/>
    <property type="evidence" value="ECO:0007669"/>
    <property type="project" value="TreeGrafter"/>
</dbReference>
<dbReference type="GO" id="GO:0004731">
    <property type="term" value="F:purine-nucleoside phosphorylase activity"/>
    <property type="evidence" value="ECO:0007669"/>
    <property type="project" value="UniProtKB-UniRule"/>
</dbReference>
<dbReference type="GO" id="GO:0006152">
    <property type="term" value="P:purine nucleoside catabolic process"/>
    <property type="evidence" value="ECO:0007669"/>
    <property type="project" value="TreeGrafter"/>
</dbReference>
<dbReference type="CDD" id="cd09006">
    <property type="entry name" value="PNP_EcPNPI-like"/>
    <property type="match status" value="1"/>
</dbReference>
<dbReference type="FunFam" id="3.40.50.1580:FF:000002">
    <property type="entry name" value="Purine nucleoside phosphorylase DeoD-type"/>
    <property type="match status" value="1"/>
</dbReference>
<dbReference type="Gene3D" id="3.40.50.1580">
    <property type="entry name" value="Nucleoside phosphorylase domain"/>
    <property type="match status" value="1"/>
</dbReference>
<dbReference type="HAMAP" id="MF_01627">
    <property type="entry name" value="Pur_nucleosid_phosp"/>
    <property type="match status" value="1"/>
</dbReference>
<dbReference type="InterPro" id="IPR004402">
    <property type="entry name" value="DeoD-type"/>
</dbReference>
<dbReference type="InterPro" id="IPR018016">
    <property type="entry name" value="Nucleoside_phosphorylase_CS"/>
</dbReference>
<dbReference type="InterPro" id="IPR000845">
    <property type="entry name" value="Nucleoside_phosphorylase_d"/>
</dbReference>
<dbReference type="InterPro" id="IPR035994">
    <property type="entry name" value="Nucleoside_phosphorylase_sf"/>
</dbReference>
<dbReference type="NCBIfam" id="TIGR00107">
    <property type="entry name" value="deoD"/>
    <property type="match status" value="1"/>
</dbReference>
<dbReference type="NCBIfam" id="NF004489">
    <property type="entry name" value="PRK05819.1"/>
    <property type="match status" value="1"/>
</dbReference>
<dbReference type="NCBIfam" id="NF009914">
    <property type="entry name" value="PRK13374.1"/>
    <property type="match status" value="1"/>
</dbReference>
<dbReference type="PANTHER" id="PTHR43691:SF2">
    <property type="entry name" value="PURINE NUCLEOSIDE PHOSPHORYLASE DEOD-TYPE"/>
    <property type="match status" value="1"/>
</dbReference>
<dbReference type="PANTHER" id="PTHR43691">
    <property type="entry name" value="URIDINE PHOSPHORYLASE"/>
    <property type="match status" value="1"/>
</dbReference>
<dbReference type="Pfam" id="PF01048">
    <property type="entry name" value="PNP_UDP_1"/>
    <property type="match status" value="1"/>
</dbReference>
<dbReference type="SUPFAM" id="SSF53167">
    <property type="entry name" value="Purine and uridine phosphorylases"/>
    <property type="match status" value="1"/>
</dbReference>
<dbReference type="PROSITE" id="PS01232">
    <property type="entry name" value="PNP_UDP_1"/>
    <property type="match status" value="1"/>
</dbReference>
<protein>
    <recommendedName>
        <fullName evidence="2">Purine nucleoside phosphorylase DeoD-type</fullName>
        <shortName evidence="2">PNP</shortName>
        <ecNumber evidence="2">2.4.2.1</ecNumber>
    </recommendedName>
</protein>
<accession>C5BHJ5</accession>
<name>DEOD_EDWI9</name>
<gene>
    <name evidence="2" type="primary">deoD</name>
    <name type="ordered locus">NT01EI_0565</name>
</gene>